<keyword id="KW-0067">ATP-binding</keyword>
<keyword id="KW-0317">Glutathione biosynthesis</keyword>
<keyword id="KW-0436">Ligase</keyword>
<keyword id="KW-0460">Magnesium</keyword>
<keyword id="KW-0464">Manganese</keyword>
<keyword id="KW-0479">Metal-binding</keyword>
<keyword id="KW-0547">Nucleotide-binding</keyword>
<keyword id="KW-1185">Reference proteome</keyword>
<evidence type="ECO:0000250" key="1"/>
<evidence type="ECO:0000255" key="2">
    <source>
        <dbReference type="HAMAP-Rule" id="MF_00162"/>
    </source>
</evidence>
<comment type="catalytic activity">
    <reaction evidence="2">
        <text>gamma-L-glutamyl-L-cysteine + glycine + ATP = glutathione + ADP + phosphate + H(+)</text>
        <dbReference type="Rhea" id="RHEA:13557"/>
        <dbReference type="ChEBI" id="CHEBI:15378"/>
        <dbReference type="ChEBI" id="CHEBI:30616"/>
        <dbReference type="ChEBI" id="CHEBI:43474"/>
        <dbReference type="ChEBI" id="CHEBI:57305"/>
        <dbReference type="ChEBI" id="CHEBI:57925"/>
        <dbReference type="ChEBI" id="CHEBI:58173"/>
        <dbReference type="ChEBI" id="CHEBI:456216"/>
        <dbReference type="EC" id="6.3.2.3"/>
    </reaction>
</comment>
<comment type="cofactor">
    <cofactor evidence="1">
        <name>Mg(2+)</name>
        <dbReference type="ChEBI" id="CHEBI:18420"/>
    </cofactor>
    <cofactor evidence="1">
        <name>Mn(2+)</name>
        <dbReference type="ChEBI" id="CHEBI:29035"/>
    </cofactor>
    <text evidence="1">Binds 1 Mg(2+) or Mn(2+) ion per subunit.</text>
</comment>
<comment type="pathway">
    <text evidence="2">Sulfur metabolism; glutathione biosynthesis; glutathione from L-cysteine and L-glutamate: step 2/2.</text>
</comment>
<comment type="similarity">
    <text evidence="2">Belongs to the prokaryotic GSH synthase family.</text>
</comment>
<name>GSHB_SHIFL</name>
<proteinExistence type="inferred from homology"/>
<organism>
    <name type="scientific">Shigella flexneri</name>
    <dbReference type="NCBI Taxonomy" id="623"/>
    <lineage>
        <taxon>Bacteria</taxon>
        <taxon>Pseudomonadati</taxon>
        <taxon>Pseudomonadota</taxon>
        <taxon>Gammaproteobacteria</taxon>
        <taxon>Enterobacterales</taxon>
        <taxon>Enterobacteriaceae</taxon>
        <taxon>Shigella</taxon>
    </lineage>
</organism>
<dbReference type="EC" id="6.3.2.3" evidence="2"/>
<dbReference type="EMBL" id="AE005674">
    <property type="protein sequence ID" value="AAN44419.1"/>
    <property type="molecule type" value="Genomic_DNA"/>
</dbReference>
<dbReference type="EMBL" id="AE014073">
    <property type="protein sequence ID" value="AAP18244.1"/>
    <property type="molecule type" value="Genomic_DNA"/>
</dbReference>
<dbReference type="RefSeq" id="NP_708712.1">
    <property type="nucleotide sequence ID" value="NC_004337.2"/>
</dbReference>
<dbReference type="RefSeq" id="WP_000593267.1">
    <property type="nucleotide sequence ID" value="NZ_WPGW01000085.1"/>
</dbReference>
<dbReference type="RefSeq" id="WP_000593282.1">
    <property type="nucleotide sequence ID" value="NZ_JANXIW010000001.1"/>
</dbReference>
<dbReference type="SMR" id="Q83Q91"/>
<dbReference type="STRING" id="198214.SF2938"/>
<dbReference type="PaxDb" id="198214-SF2938"/>
<dbReference type="GeneID" id="1023882"/>
<dbReference type="KEGG" id="sfl:SF2938"/>
<dbReference type="KEGG" id="sfx:S3142"/>
<dbReference type="PATRIC" id="fig|198214.7.peg.3495"/>
<dbReference type="HOGENOM" id="CLU_068239_0_0_6"/>
<dbReference type="UniPathway" id="UPA00142">
    <property type="reaction ID" value="UER00210"/>
</dbReference>
<dbReference type="Proteomes" id="UP000001006">
    <property type="component" value="Chromosome"/>
</dbReference>
<dbReference type="Proteomes" id="UP000002673">
    <property type="component" value="Chromosome"/>
</dbReference>
<dbReference type="GO" id="GO:0005737">
    <property type="term" value="C:cytoplasm"/>
    <property type="evidence" value="ECO:0007669"/>
    <property type="project" value="TreeGrafter"/>
</dbReference>
<dbReference type="GO" id="GO:0005524">
    <property type="term" value="F:ATP binding"/>
    <property type="evidence" value="ECO:0007669"/>
    <property type="project" value="UniProtKB-UniRule"/>
</dbReference>
<dbReference type="GO" id="GO:0004363">
    <property type="term" value="F:glutathione synthase activity"/>
    <property type="evidence" value="ECO:0007669"/>
    <property type="project" value="UniProtKB-UniRule"/>
</dbReference>
<dbReference type="GO" id="GO:0046872">
    <property type="term" value="F:metal ion binding"/>
    <property type="evidence" value="ECO:0007669"/>
    <property type="project" value="UniProtKB-KW"/>
</dbReference>
<dbReference type="FunFam" id="3.30.1490.20:FF:000009">
    <property type="entry name" value="Glutathione synthetase"/>
    <property type="match status" value="1"/>
</dbReference>
<dbReference type="FunFam" id="3.30.470.20:FF:000010">
    <property type="entry name" value="Glutathione synthetase"/>
    <property type="match status" value="1"/>
</dbReference>
<dbReference type="FunFam" id="3.40.50.20:FF:000009">
    <property type="entry name" value="Glutathione synthetase"/>
    <property type="match status" value="1"/>
</dbReference>
<dbReference type="Gene3D" id="3.40.50.20">
    <property type="match status" value="1"/>
</dbReference>
<dbReference type="Gene3D" id="3.30.1490.20">
    <property type="entry name" value="ATP-grasp fold, A domain"/>
    <property type="match status" value="1"/>
</dbReference>
<dbReference type="Gene3D" id="3.30.470.20">
    <property type="entry name" value="ATP-grasp fold, B domain"/>
    <property type="match status" value="1"/>
</dbReference>
<dbReference type="HAMAP" id="MF_00162">
    <property type="entry name" value="GSH_S"/>
    <property type="match status" value="1"/>
</dbReference>
<dbReference type="InterPro" id="IPR011761">
    <property type="entry name" value="ATP-grasp"/>
</dbReference>
<dbReference type="InterPro" id="IPR013815">
    <property type="entry name" value="ATP_grasp_subdomain_1"/>
</dbReference>
<dbReference type="InterPro" id="IPR006284">
    <property type="entry name" value="Glut_synth_pro"/>
</dbReference>
<dbReference type="InterPro" id="IPR004218">
    <property type="entry name" value="GSHS_ATP-bd"/>
</dbReference>
<dbReference type="InterPro" id="IPR004215">
    <property type="entry name" value="GSHS_N"/>
</dbReference>
<dbReference type="InterPro" id="IPR016185">
    <property type="entry name" value="PreATP-grasp_dom_sf"/>
</dbReference>
<dbReference type="NCBIfam" id="TIGR01380">
    <property type="entry name" value="glut_syn"/>
    <property type="match status" value="1"/>
</dbReference>
<dbReference type="NCBIfam" id="NF003573">
    <property type="entry name" value="PRK05246.1"/>
    <property type="match status" value="1"/>
</dbReference>
<dbReference type="PANTHER" id="PTHR21621:SF4">
    <property type="entry name" value="GLUTATHIONE SYNTHETASE"/>
    <property type="match status" value="1"/>
</dbReference>
<dbReference type="PANTHER" id="PTHR21621">
    <property type="entry name" value="RIBOSOMAL PROTEIN S6 MODIFICATION PROTEIN"/>
    <property type="match status" value="1"/>
</dbReference>
<dbReference type="Pfam" id="PF02955">
    <property type="entry name" value="GSH-S_ATP"/>
    <property type="match status" value="1"/>
</dbReference>
<dbReference type="Pfam" id="PF02951">
    <property type="entry name" value="GSH-S_N"/>
    <property type="match status" value="1"/>
</dbReference>
<dbReference type="SUPFAM" id="SSF56059">
    <property type="entry name" value="Glutathione synthetase ATP-binding domain-like"/>
    <property type="match status" value="1"/>
</dbReference>
<dbReference type="SUPFAM" id="SSF52440">
    <property type="entry name" value="PreATP-grasp domain"/>
    <property type="match status" value="1"/>
</dbReference>
<dbReference type="PROSITE" id="PS50975">
    <property type="entry name" value="ATP_GRASP"/>
    <property type="match status" value="1"/>
</dbReference>
<feature type="chain" id="PRO_0000197486" description="Glutathione synthetase">
    <location>
        <begin position="1"/>
        <end position="316"/>
    </location>
</feature>
<feature type="domain" description="ATP-grasp" evidence="2">
    <location>
        <begin position="125"/>
        <end position="310"/>
    </location>
</feature>
<feature type="binding site" evidence="2">
    <location>
        <begin position="151"/>
        <end position="207"/>
    </location>
    <ligand>
        <name>ATP</name>
        <dbReference type="ChEBI" id="CHEBI:30616"/>
    </ligand>
</feature>
<feature type="binding site" evidence="2">
    <location>
        <position position="281"/>
    </location>
    <ligand>
        <name>Mg(2+)</name>
        <dbReference type="ChEBI" id="CHEBI:18420"/>
    </ligand>
</feature>
<feature type="binding site" evidence="2">
    <location>
        <position position="283"/>
    </location>
    <ligand>
        <name>Mg(2+)</name>
        <dbReference type="ChEBI" id="CHEBI:18420"/>
    </ligand>
</feature>
<protein>
    <recommendedName>
        <fullName evidence="2">Glutathione synthetase</fullName>
        <ecNumber evidence="2">6.3.2.3</ecNumber>
    </recommendedName>
    <alternativeName>
        <fullName evidence="2">GSH synthetase</fullName>
        <shortName evidence="2">GSH-S</shortName>
        <shortName evidence="2">GSHase</shortName>
    </alternativeName>
    <alternativeName>
        <fullName evidence="2">Glutathione synthase</fullName>
    </alternativeName>
</protein>
<gene>
    <name evidence="2" type="primary">gshB</name>
    <name type="ordered locus">SF2938</name>
    <name type="ordered locus">S3142</name>
</gene>
<reference key="1">
    <citation type="journal article" date="2002" name="Nucleic Acids Res.">
        <title>Genome sequence of Shigella flexneri 2a: insights into pathogenicity through comparison with genomes of Escherichia coli K12 and O157.</title>
        <authorList>
            <person name="Jin Q."/>
            <person name="Yuan Z."/>
            <person name="Xu J."/>
            <person name="Wang Y."/>
            <person name="Shen Y."/>
            <person name="Lu W."/>
            <person name="Wang J."/>
            <person name="Liu H."/>
            <person name="Yang J."/>
            <person name="Yang F."/>
            <person name="Zhang X."/>
            <person name="Zhang J."/>
            <person name="Yang G."/>
            <person name="Wu H."/>
            <person name="Qu D."/>
            <person name="Dong J."/>
            <person name="Sun L."/>
            <person name="Xue Y."/>
            <person name="Zhao A."/>
            <person name="Gao Y."/>
            <person name="Zhu J."/>
            <person name="Kan B."/>
            <person name="Ding K."/>
            <person name="Chen S."/>
            <person name="Cheng H."/>
            <person name="Yao Z."/>
            <person name="He B."/>
            <person name="Chen R."/>
            <person name="Ma D."/>
            <person name="Qiang B."/>
            <person name="Wen Y."/>
            <person name="Hou Y."/>
            <person name="Yu J."/>
        </authorList>
    </citation>
    <scope>NUCLEOTIDE SEQUENCE [LARGE SCALE GENOMIC DNA]</scope>
    <source>
        <strain>301 / Serotype 2a</strain>
    </source>
</reference>
<reference key="2">
    <citation type="journal article" date="2003" name="Infect. Immun.">
        <title>Complete genome sequence and comparative genomics of Shigella flexneri serotype 2a strain 2457T.</title>
        <authorList>
            <person name="Wei J."/>
            <person name="Goldberg M.B."/>
            <person name="Burland V."/>
            <person name="Venkatesan M.M."/>
            <person name="Deng W."/>
            <person name="Fournier G."/>
            <person name="Mayhew G.F."/>
            <person name="Plunkett G. III"/>
            <person name="Rose D.J."/>
            <person name="Darling A."/>
            <person name="Mau B."/>
            <person name="Perna N.T."/>
            <person name="Payne S.M."/>
            <person name="Runyen-Janecky L.J."/>
            <person name="Zhou S."/>
            <person name="Schwartz D.C."/>
            <person name="Blattner F.R."/>
        </authorList>
    </citation>
    <scope>NUCLEOTIDE SEQUENCE [LARGE SCALE GENOMIC DNA]</scope>
    <source>
        <strain>ATCC 700930 / 2457T / Serotype 2a</strain>
    </source>
</reference>
<sequence length="316" mass="35508">MIKLGIVMDPIANINIKKDSSFAMLLEAQRRGYELHYMEMGDLYLINGEARAHTRTLNVKQNYEEWFSFVGEQDLPLADLDVILMRKDPPFDTEFIYATYILERAEEKGTLIVNKPQSLRDCNEKLFTAWFSDLTPETLVTRNKAQLKAFWEKHSDIILKPLDGMGGASIFRVKEGDPNLGVIAETLTEHGTCYCMAQNYLPAIKDGDKRVLVVDGEPVPYCLARIPQGGETRGNLAAGGRGEPRPLTESDWKIARQIGPTLKEKGLIFVGLDIIGDRLTEINVTSPTCIREIEAEFPVSITGMLMDAIEARLQQQ</sequence>
<accession>Q83Q91</accession>
<accession>Q7UBN2</accession>